<comment type="caution">
    <text evidence="2">The order of the peptides shown is unknown.</text>
</comment>
<evidence type="ECO:0000303" key="1">
    <source>
    </source>
</evidence>
<evidence type="ECO:0000305" key="2"/>
<reference key="1">
    <citation type="journal article" date="2008" name="J. Proteomics">
        <title>A proteomics approach to identify proteins differentially expressed in Douglas-fir seedlings infected by Phellinus sulphurascens.</title>
        <authorList>
            <person name="Islam M.A."/>
            <person name="Sturrock R.N."/>
            <person name="Ekramoddoullah A.K.M."/>
        </authorList>
    </citation>
    <scope>IDENTIFICATION BY MASS SPECTROMETRY</scope>
</reference>
<accession>P85935</accession>
<feature type="chain" id="PRO_0000347308" description="Unknown protein 21">
    <location>
        <begin position="1" status="less than"/>
        <end position="14" status="greater than"/>
    </location>
</feature>
<feature type="non-consecutive residues" evidence="1">
    <location>
        <begin position="6"/>
        <end position="7"/>
    </location>
</feature>
<feature type="non-terminal residue" evidence="1">
    <location>
        <position position="1"/>
    </location>
</feature>
<feature type="non-terminal residue" evidence="1">
    <location>
        <position position="14"/>
    </location>
</feature>
<protein>
    <recommendedName>
        <fullName>Unknown protein 21</fullName>
    </recommendedName>
</protein>
<name>UP21_PSEMZ</name>
<sequence>MIREPRIREPRSLA</sequence>
<proteinExistence type="evidence at protein level"/>
<organism>
    <name type="scientific">Pseudotsuga menziesii</name>
    <name type="common">Douglas-fir</name>
    <name type="synonym">Abies menziesii</name>
    <dbReference type="NCBI Taxonomy" id="3357"/>
    <lineage>
        <taxon>Eukaryota</taxon>
        <taxon>Viridiplantae</taxon>
        <taxon>Streptophyta</taxon>
        <taxon>Embryophyta</taxon>
        <taxon>Tracheophyta</taxon>
        <taxon>Spermatophyta</taxon>
        <taxon>Pinopsida</taxon>
        <taxon>Pinidae</taxon>
        <taxon>Conifers I</taxon>
        <taxon>Pinales</taxon>
        <taxon>Pinaceae</taxon>
        <taxon>Pseudotsuga</taxon>
    </lineage>
</organism>